<feature type="chain" id="PRO_0000383799" description="Structure-specific endonuclease subunit slx1">
    <location>
        <begin position="1"/>
        <end position="273"/>
    </location>
</feature>
<feature type="domain" description="GIY-YIG" evidence="1">
    <location>
        <begin position="1"/>
        <end position="82"/>
    </location>
</feature>
<feature type="zinc finger region" description="SLX1-type" evidence="1">
    <location>
        <begin position="180"/>
        <end position="234"/>
    </location>
</feature>
<feature type="region of interest" description="Disordered" evidence="2">
    <location>
        <begin position="250"/>
        <end position="273"/>
    </location>
</feature>
<comment type="function">
    <text evidence="1">Catalytic subunit of the slx1-slx4 structure-specific endonuclease that resolves DNA secondary structures generated during DNA repair and recombination. Has endonuclease activity towards branched DNA substrates, introducing single-strand cuts in duplex DNA close to junctions with ss-DNA.</text>
</comment>
<comment type="cofactor">
    <cofactor evidence="1">
        <name>a divalent metal cation</name>
        <dbReference type="ChEBI" id="CHEBI:60240"/>
    </cofactor>
</comment>
<comment type="subunit">
    <text evidence="1">Forms a heterodimer with slx4.</text>
</comment>
<comment type="subcellular location">
    <subcellularLocation>
        <location evidence="1">Nucleus</location>
    </subcellularLocation>
</comment>
<comment type="similarity">
    <text evidence="1">Belongs to the SLX1 family.</text>
</comment>
<organism>
    <name type="scientific">Schizosaccharomyces japonicus (strain yFS275 / FY16936)</name>
    <name type="common">Fission yeast</name>
    <dbReference type="NCBI Taxonomy" id="402676"/>
    <lineage>
        <taxon>Eukaryota</taxon>
        <taxon>Fungi</taxon>
        <taxon>Dikarya</taxon>
        <taxon>Ascomycota</taxon>
        <taxon>Taphrinomycotina</taxon>
        <taxon>Schizosaccharomycetes</taxon>
        <taxon>Schizosaccharomycetales</taxon>
        <taxon>Schizosaccharomycetaceae</taxon>
        <taxon>Schizosaccharomyces</taxon>
    </lineage>
</organism>
<accession>B6JY16</accession>
<proteinExistence type="inferred from homology"/>
<protein>
    <recommendedName>
        <fullName evidence="1">Structure-specific endonuclease subunit slx1</fullName>
        <ecNumber evidence="1">3.1.-.-</ecNumber>
    </recommendedName>
</protein>
<gene>
    <name type="primary">slx1</name>
    <name type="ORF">SJAG_05237</name>
</gene>
<sequence length="273" mass="30842">MFYCCYLLVSEKAASRSVYIGSTPDPARRLRQHNGEIKGGAYKTKRSRPWKVACFVHGFPTKIAALQFEWVWQHPQSTRHDDLRQHSRVVSVKRQTLLSCVRALGVMLCCEAWSRWGLRVAIFDDAVHRLWLKERLPSNCIQLCSFDDVESLRLADYGGDAGWLDTQRKKRAQLSVQAQCSICVRAILLPCFFLCCPFPDCRMIAHSTCLAASFLQEAQDDEHILPISGTCARCKRLLSWKLLVQASLSPSDEDNGAVGDTGESDDNNERESS</sequence>
<reference key="1">
    <citation type="journal article" date="2011" name="Science">
        <title>Comparative functional genomics of the fission yeasts.</title>
        <authorList>
            <person name="Rhind N."/>
            <person name="Chen Z."/>
            <person name="Yassour M."/>
            <person name="Thompson D.A."/>
            <person name="Haas B.J."/>
            <person name="Habib N."/>
            <person name="Wapinski I."/>
            <person name="Roy S."/>
            <person name="Lin M.F."/>
            <person name="Heiman D.I."/>
            <person name="Young S.K."/>
            <person name="Furuya K."/>
            <person name="Guo Y."/>
            <person name="Pidoux A."/>
            <person name="Chen H.M."/>
            <person name="Robbertse B."/>
            <person name="Goldberg J.M."/>
            <person name="Aoki K."/>
            <person name="Bayne E.H."/>
            <person name="Berlin A.M."/>
            <person name="Desjardins C.A."/>
            <person name="Dobbs E."/>
            <person name="Dukaj L."/>
            <person name="Fan L."/>
            <person name="FitzGerald M.G."/>
            <person name="French C."/>
            <person name="Gujja S."/>
            <person name="Hansen K."/>
            <person name="Keifenheim D."/>
            <person name="Levin J.Z."/>
            <person name="Mosher R.A."/>
            <person name="Mueller C.A."/>
            <person name="Pfiffner J."/>
            <person name="Priest M."/>
            <person name="Russ C."/>
            <person name="Smialowska A."/>
            <person name="Swoboda P."/>
            <person name="Sykes S.M."/>
            <person name="Vaughn M."/>
            <person name="Vengrova S."/>
            <person name="Yoder R."/>
            <person name="Zeng Q."/>
            <person name="Allshire R."/>
            <person name="Baulcombe D."/>
            <person name="Birren B.W."/>
            <person name="Brown W."/>
            <person name="Ekwall K."/>
            <person name="Kellis M."/>
            <person name="Leatherwood J."/>
            <person name="Levin H."/>
            <person name="Margalit H."/>
            <person name="Martienssen R."/>
            <person name="Nieduszynski C.A."/>
            <person name="Spatafora J.W."/>
            <person name="Friedman N."/>
            <person name="Dalgaard J.Z."/>
            <person name="Baumann P."/>
            <person name="Niki H."/>
            <person name="Regev A."/>
            <person name="Nusbaum C."/>
        </authorList>
    </citation>
    <scope>NUCLEOTIDE SEQUENCE [LARGE SCALE GENOMIC DNA]</scope>
    <source>
        <strain>yFS275 / FY16936</strain>
    </source>
</reference>
<name>SLX1_SCHJY</name>
<evidence type="ECO:0000255" key="1">
    <source>
        <dbReference type="HAMAP-Rule" id="MF_03100"/>
    </source>
</evidence>
<evidence type="ECO:0000256" key="2">
    <source>
        <dbReference type="SAM" id="MobiDB-lite"/>
    </source>
</evidence>
<dbReference type="EC" id="3.1.-.-" evidence="1"/>
<dbReference type="EMBL" id="KE651168">
    <property type="protein sequence ID" value="EEB06434.1"/>
    <property type="molecule type" value="Genomic_DNA"/>
</dbReference>
<dbReference type="RefSeq" id="XP_002172727.1">
    <property type="nucleotide sequence ID" value="XM_002172691.1"/>
</dbReference>
<dbReference type="SMR" id="B6JY16"/>
<dbReference type="STRING" id="402676.B6JY16"/>
<dbReference type="EnsemblFungi" id="EEB06434">
    <property type="protein sequence ID" value="EEB06434"/>
    <property type="gene ID" value="SJAG_05237"/>
</dbReference>
<dbReference type="GeneID" id="7051433"/>
<dbReference type="JaponicusDB" id="SJAG_05237">
    <property type="gene designation" value="slx1"/>
</dbReference>
<dbReference type="VEuPathDB" id="FungiDB:SJAG_05237"/>
<dbReference type="eggNOG" id="KOG3005">
    <property type="taxonomic scope" value="Eukaryota"/>
</dbReference>
<dbReference type="HOGENOM" id="CLU_030739_1_1_1"/>
<dbReference type="OMA" id="CVECAGY"/>
<dbReference type="OrthoDB" id="24645at2759"/>
<dbReference type="Proteomes" id="UP000001744">
    <property type="component" value="Unassembled WGS sequence"/>
</dbReference>
<dbReference type="GO" id="GO:0030875">
    <property type="term" value="C:rDNA protrusion"/>
    <property type="evidence" value="ECO:0007669"/>
    <property type="project" value="EnsemblFungi"/>
</dbReference>
<dbReference type="GO" id="GO:0033557">
    <property type="term" value="C:Slx1-Slx4 complex"/>
    <property type="evidence" value="ECO:0007669"/>
    <property type="project" value="UniProtKB-UniRule"/>
</dbReference>
<dbReference type="GO" id="GO:0017108">
    <property type="term" value="F:5'-flap endonuclease activity"/>
    <property type="evidence" value="ECO:0007669"/>
    <property type="project" value="EnsemblFungi"/>
</dbReference>
<dbReference type="GO" id="GO:0008821">
    <property type="term" value="F:crossover junction DNA endonuclease activity"/>
    <property type="evidence" value="ECO:0007669"/>
    <property type="project" value="EnsemblFungi"/>
</dbReference>
<dbReference type="GO" id="GO:0106332">
    <property type="term" value="F:ds/ssDNA junction-specific dsDNA endonuclease activity"/>
    <property type="evidence" value="ECO:0007669"/>
    <property type="project" value="EnsemblFungi"/>
</dbReference>
<dbReference type="GO" id="GO:0008270">
    <property type="term" value="F:zinc ion binding"/>
    <property type="evidence" value="ECO:0007669"/>
    <property type="project" value="UniProtKB-KW"/>
</dbReference>
<dbReference type="GO" id="GO:0006261">
    <property type="term" value="P:DNA-templated DNA replication"/>
    <property type="evidence" value="ECO:0007669"/>
    <property type="project" value="EnsemblFungi"/>
</dbReference>
<dbReference type="GO" id="GO:0000724">
    <property type="term" value="P:double-strand break repair via homologous recombination"/>
    <property type="evidence" value="ECO:0007669"/>
    <property type="project" value="EnsemblFungi"/>
</dbReference>
<dbReference type="GO" id="GO:0043007">
    <property type="term" value="P:maintenance of rDNA"/>
    <property type="evidence" value="ECO:0007669"/>
    <property type="project" value="EnsemblFungi"/>
</dbReference>
<dbReference type="CDD" id="cd10455">
    <property type="entry name" value="GIY-YIG_SLX1"/>
    <property type="match status" value="1"/>
</dbReference>
<dbReference type="Gene3D" id="3.40.1440.10">
    <property type="entry name" value="GIY-YIG endonuclease"/>
    <property type="match status" value="1"/>
</dbReference>
<dbReference type="Gene3D" id="3.30.40.10">
    <property type="entry name" value="Zinc/RING finger domain, C3HC4 (zinc finger)"/>
    <property type="match status" value="1"/>
</dbReference>
<dbReference type="HAMAP" id="MF_03100">
    <property type="entry name" value="Endonuc_su_Slx1"/>
    <property type="match status" value="1"/>
</dbReference>
<dbReference type="InterPro" id="IPR000305">
    <property type="entry name" value="GIY-YIG_endonuc"/>
</dbReference>
<dbReference type="InterPro" id="IPR035901">
    <property type="entry name" value="GIY-YIG_endonuc_sf"/>
</dbReference>
<dbReference type="InterPro" id="IPR027520">
    <property type="entry name" value="Slx1"/>
</dbReference>
<dbReference type="InterPro" id="IPR048749">
    <property type="entry name" value="SLX1_C"/>
</dbReference>
<dbReference type="InterPro" id="IPR050381">
    <property type="entry name" value="SLX1_endonuclease"/>
</dbReference>
<dbReference type="InterPro" id="IPR013083">
    <property type="entry name" value="Znf_RING/FYVE/PHD"/>
</dbReference>
<dbReference type="PANTHER" id="PTHR20208">
    <property type="entry name" value="STRUCTURE-SPECIFIC ENDONUCLEASE SUBUNIT SLX1"/>
    <property type="match status" value="1"/>
</dbReference>
<dbReference type="PANTHER" id="PTHR20208:SF13">
    <property type="entry name" value="STRUCTURE-SPECIFIC ENDONUCLEASE SUBUNIT SLX1"/>
    <property type="match status" value="1"/>
</dbReference>
<dbReference type="Pfam" id="PF01541">
    <property type="entry name" value="GIY-YIG"/>
    <property type="match status" value="1"/>
</dbReference>
<dbReference type="Pfam" id="PF21202">
    <property type="entry name" value="SLX1_C"/>
    <property type="match status" value="1"/>
</dbReference>
<dbReference type="SUPFAM" id="SSF82771">
    <property type="entry name" value="GIY-YIG endonuclease"/>
    <property type="match status" value="1"/>
</dbReference>
<dbReference type="PROSITE" id="PS50164">
    <property type="entry name" value="GIY_YIG"/>
    <property type="match status" value="1"/>
</dbReference>
<keyword id="KW-0227">DNA damage</keyword>
<keyword id="KW-0233">DNA recombination</keyword>
<keyword id="KW-0234">DNA repair</keyword>
<keyword id="KW-0255">Endonuclease</keyword>
<keyword id="KW-0378">Hydrolase</keyword>
<keyword id="KW-0479">Metal-binding</keyword>
<keyword id="KW-0540">Nuclease</keyword>
<keyword id="KW-0539">Nucleus</keyword>
<keyword id="KW-1185">Reference proteome</keyword>
<keyword id="KW-0862">Zinc</keyword>
<keyword id="KW-0863">Zinc-finger</keyword>